<organism>
    <name type="scientific">Pyrococcus furiosus (strain ATCC 43587 / DSM 3638 / JCM 8422 / Vc1)</name>
    <dbReference type="NCBI Taxonomy" id="186497"/>
    <lineage>
        <taxon>Archaea</taxon>
        <taxon>Methanobacteriati</taxon>
        <taxon>Methanobacteriota</taxon>
        <taxon>Thermococci</taxon>
        <taxon>Thermococcales</taxon>
        <taxon>Thermococcaceae</taxon>
        <taxon>Pyrococcus</taxon>
    </lineage>
</organism>
<gene>
    <name evidence="1" type="primary">nadE</name>
    <name type="ordered locus">PF0098</name>
</gene>
<name>NADE_PYRFU</name>
<feature type="chain" id="PRO_0000152231" description="NH(3)-dependent NAD(+) synthetase">
    <location>
        <begin position="1"/>
        <end position="257"/>
    </location>
</feature>
<feature type="binding site" evidence="1">
    <location>
        <begin position="28"/>
        <end position="35"/>
    </location>
    <ligand>
        <name>ATP</name>
        <dbReference type="ChEBI" id="CHEBI:30616"/>
    </ligand>
</feature>
<feature type="binding site" evidence="1">
    <location>
        <position position="34"/>
    </location>
    <ligand>
        <name>Mg(2+)</name>
        <dbReference type="ChEBI" id="CHEBI:18420"/>
    </ligand>
</feature>
<feature type="binding site" evidence="1">
    <location>
        <position position="109"/>
    </location>
    <ligand>
        <name>deamido-NAD(+)</name>
        <dbReference type="ChEBI" id="CHEBI:58437"/>
    </ligand>
</feature>
<feature type="binding site" evidence="1">
    <location>
        <position position="129"/>
    </location>
    <ligand>
        <name>ATP</name>
        <dbReference type="ChEBI" id="CHEBI:30616"/>
    </ligand>
</feature>
<feature type="binding site" evidence="1">
    <location>
        <position position="134"/>
    </location>
    <ligand>
        <name>Mg(2+)</name>
        <dbReference type="ChEBI" id="CHEBI:18420"/>
    </ligand>
</feature>
<feature type="binding site" evidence="1">
    <location>
        <position position="142"/>
    </location>
    <ligand>
        <name>deamido-NAD(+)</name>
        <dbReference type="ChEBI" id="CHEBI:58437"/>
    </ligand>
</feature>
<feature type="binding site" evidence="1">
    <location>
        <position position="149"/>
    </location>
    <ligand>
        <name>deamido-NAD(+)</name>
        <dbReference type="ChEBI" id="CHEBI:58437"/>
    </ligand>
</feature>
<feature type="binding site" evidence="1">
    <location>
        <position position="158"/>
    </location>
    <ligand>
        <name>ATP</name>
        <dbReference type="ChEBI" id="CHEBI:30616"/>
    </ligand>
</feature>
<feature type="binding site" evidence="1">
    <location>
        <position position="180"/>
    </location>
    <ligand>
        <name>ATP</name>
        <dbReference type="ChEBI" id="CHEBI:30616"/>
    </ligand>
</feature>
<feature type="binding site" evidence="1">
    <location>
        <begin position="240"/>
        <end position="241"/>
    </location>
    <ligand>
        <name>deamido-NAD(+)</name>
        <dbReference type="ChEBI" id="CHEBI:58437"/>
    </ligand>
</feature>
<comment type="function">
    <text evidence="1">Catalyzes the ATP-dependent amidation of deamido-NAD to form NAD. Uses ammonia as a nitrogen source.</text>
</comment>
<comment type="catalytic activity">
    <reaction evidence="1">
        <text>deamido-NAD(+) + NH4(+) + ATP = AMP + diphosphate + NAD(+) + H(+)</text>
        <dbReference type="Rhea" id="RHEA:21188"/>
        <dbReference type="ChEBI" id="CHEBI:15378"/>
        <dbReference type="ChEBI" id="CHEBI:28938"/>
        <dbReference type="ChEBI" id="CHEBI:30616"/>
        <dbReference type="ChEBI" id="CHEBI:33019"/>
        <dbReference type="ChEBI" id="CHEBI:57540"/>
        <dbReference type="ChEBI" id="CHEBI:58437"/>
        <dbReference type="ChEBI" id="CHEBI:456215"/>
        <dbReference type="EC" id="6.3.1.5"/>
    </reaction>
</comment>
<comment type="pathway">
    <text evidence="1">Cofactor biosynthesis; NAD(+) biosynthesis; NAD(+) from deamido-NAD(+) (ammonia route): step 1/1.</text>
</comment>
<comment type="subunit">
    <text evidence="1">Homodimer.</text>
</comment>
<comment type="similarity">
    <text evidence="1">Belongs to the NAD synthetase family.</text>
</comment>
<evidence type="ECO:0000255" key="1">
    <source>
        <dbReference type="HAMAP-Rule" id="MF_00193"/>
    </source>
</evidence>
<proteinExistence type="inferred from homology"/>
<protein>
    <recommendedName>
        <fullName evidence="1">NH(3)-dependent NAD(+) synthetase</fullName>
        <ecNumber evidence="1">6.3.1.5</ecNumber>
    </recommendedName>
</protein>
<accession>Q8U4I9</accession>
<dbReference type="EC" id="6.3.1.5" evidence="1"/>
<dbReference type="EMBL" id="AE009950">
    <property type="protein sequence ID" value="AAL80222.1"/>
    <property type="molecule type" value="Genomic_DNA"/>
</dbReference>
<dbReference type="RefSeq" id="WP_011011210.1">
    <property type="nucleotide sequence ID" value="NZ_CP023154.1"/>
</dbReference>
<dbReference type="SMR" id="Q8U4I9"/>
<dbReference type="STRING" id="186497.PF0098"/>
<dbReference type="PaxDb" id="186497-PF0098"/>
<dbReference type="KEGG" id="pfu:PF0098"/>
<dbReference type="PATRIC" id="fig|186497.12.peg.102"/>
<dbReference type="eggNOG" id="arCOG00069">
    <property type="taxonomic scope" value="Archaea"/>
</dbReference>
<dbReference type="HOGENOM" id="CLU_059327_1_1_2"/>
<dbReference type="OrthoDB" id="39312at2157"/>
<dbReference type="PhylomeDB" id="Q8U4I9"/>
<dbReference type="UniPathway" id="UPA00253">
    <property type="reaction ID" value="UER00333"/>
</dbReference>
<dbReference type="Proteomes" id="UP000001013">
    <property type="component" value="Chromosome"/>
</dbReference>
<dbReference type="GO" id="GO:0005737">
    <property type="term" value="C:cytoplasm"/>
    <property type="evidence" value="ECO:0007669"/>
    <property type="project" value="InterPro"/>
</dbReference>
<dbReference type="GO" id="GO:0005524">
    <property type="term" value="F:ATP binding"/>
    <property type="evidence" value="ECO:0007669"/>
    <property type="project" value="UniProtKB-UniRule"/>
</dbReference>
<dbReference type="GO" id="GO:0004359">
    <property type="term" value="F:glutaminase activity"/>
    <property type="evidence" value="ECO:0007669"/>
    <property type="project" value="InterPro"/>
</dbReference>
<dbReference type="GO" id="GO:0046872">
    <property type="term" value="F:metal ion binding"/>
    <property type="evidence" value="ECO:0007669"/>
    <property type="project" value="UniProtKB-KW"/>
</dbReference>
<dbReference type="GO" id="GO:0003952">
    <property type="term" value="F:NAD+ synthase (glutamine-hydrolyzing) activity"/>
    <property type="evidence" value="ECO:0007669"/>
    <property type="project" value="InterPro"/>
</dbReference>
<dbReference type="GO" id="GO:0008795">
    <property type="term" value="F:NAD+ synthase activity"/>
    <property type="evidence" value="ECO:0007669"/>
    <property type="project" value="UniProtKB-UniRule"/>
</dbReference>
<dbReference type="GO" id="GO:0009435">
    <property type="term" value="P:NAD biosynthetic process"/>
    <property type="evidence" value="ECO:0007669"/>
    <property type="project" value="UniProtKB-UniRule"/>
</dbReference>
<dbReference type="CDD" id="cd00553">
    <property type="entry name" value="NAD_synthase"/>
    <property type="match status" value="1"/>
</dbReference>
<dbReference type="FunFam" id="3.40.50.620:FF:000106">
    <property type="entry name" value="Glutamine-dependent NAD(+) synthetase"/>
    <property type="match status" value="1"/>
</dbReference>
<dbReference type="Gene3D" id="3.40.50.620">
    <property type="entry name" value="HUPs"/>
    <property type="match status" value="1"/>
</dbReference>
<dbReference type="HAMAP" id="MF_00193">
    <property type="entry name" value="NadE_ammonia_dep"/>
    <property type="match status" value="1"/>
</dbReference>
<dbReference type="InterPro" id="IPR022310">
    <property type="entry name" value="NAD/GMP_synthase"/>
</dbReference>
<dbReference type="InterPro" id="IPR003694">
    <property type="entry name" value="NAD_synthase"/>
</dbReference>
<dbReference type="InterPro" id="IPR022926">
    <property type="entry name" value="NH(3)-dep_NAD(+)_synth"/>
</dbReference>
<dbReference type="InterPro" id="IPR014729">
    <property type="entry name" value="Rossmann-like_a/b/a_fold"/>
</dbReference>
<dbReference type="NCBIfam" id="TIGR00552">
    <property type="entry name" value="nadE"/>
    <property type="match status" value="1"/>
</dbReference>
<dbReference type="NCBIfam" id="NF010587">
    <property type="entry name" value="PRK13980.1"/>
    <property type="match status" value="1"/>
</dbReference>
<dbReference type="PANTHER" id="PTHR23090:SF9">
    <property type="entry name" value="GLUTAMINE-DEPENDENT NAD(+) SYNTHETASE"/>
    <property type="match status" value="1"/>
</dbReference>
<dbReference type="PANTHER" id="PTHR23090">
    <property type="entry name" value="NH 3 /GLUTAMINE-DEPENDENT NAD + SYNTHETASE"/>
    <property type="match status" value="1"/>
</dbReference>
<dbReference type="Pfam" id="PF02540">
    <property type="entry name" value="NAD_synthase"/>
    <property type="match status" value="1"/>
</dbReference>
<dbReference type="SUPFAM" id="SSF52402">
    <property type="entry name" value="Adenine nucleotide alpha hydrolases-like"/>
    <property type="match status" value="1"/>
</dbReference>
<keyword id="KW-0067">ATP-binding</keyword>
<keyword id="KW-0436">Ligase</keyword>
<keyword id="KW-0460">Magnesium</keyword>
<keyword id="KW-0479">Metal-binding</keyword>
<keyword id="KW-0520">NAD</keyword>
<keyword id="KW-0547">Nucleotide-binding</keyword>
<keyword id="KW-1185">Reference proteome</keyword>
<reference key="1">
    <citation type="journal article" date="1999" name="Genetics">
        <title>Divergence of the hyperthermophilic archaea Pyrococcus furiosus and P. horikoshii inferred from complete genomic sequences.</title>
        <authorList>
            <person name="Maeder D.L."/>
            <person name="Weiss R.B."/>
            <person name="Dunn D.M."/>
            <person name="Cherry J.L."/>
            <person name="Gonzalez J.M."/>
            <person name="DiRuggiero J."/>
            <person name="Robb F.T."/>
        </authorList>
    </citation>
    <scope>NUCLEOTIDE SEQUENCE [LARGE SCALE GENOMIC DNA]</scope>
    <source>
        <strain>ATCC 43587 / DSM 3638 / JCM 8422 / Vc1</strain>
    </source>
</reference>
<sequence length="257" mass="28891">MRRLNFEKVVTRLVEFIKENAKQGVVIGISGGVDSATVAYLATKALGKDKILGLIMPYYENKDVEDAKLVAENLGIRYKIINIKPIVDTIQSSLDVALDRKSLGNIMARVRMVLLYSYANSLGRLVLGTSNRSEFLTGYFTKWGDGASDYAPLINIYKTEVWEVARIIGVPQSIVEKKPSAGLWEGQTDEDELGISYKLLDELLWRLVDLKMSKEEIANELNVSEEIVEHVEKLVKNSEHKRRLPIGPKVDDLIIEP</sequence>